<feature type="chain" id="PRO_1000052566" description="Large ribosomal subunit protein uL22">
    <location>
        <begin position="1"/>
        <end position="112"/>
    </location>
</feature>
<reference key="1">
    <citation type="journal article" date="2009" name="Environ. Microbiol.">
        <title>Contribution of mobile genetic elements to Desulfovibrio vulgaris genome plasticity.</title>
        <authorList>
            <person name="Walker C.B."/>
            <person name="Stolyar S."/>
            <person name="Chivian D."/>
            <person name="Pinel N."/>
            <person name="Gabster J.A."/>
            <person name="Dehal P.S."/>
            <person name="He Z."/>
            <person name="Yang Z.K."/>
            <person name="Yen H.C."/>
            <person name="Zhou J."/>
            <person name="Wall J.D."/>
            <person name="Hazen T.C."/>
            <person name="Arkin A.P."/>
            <person name="Stahl D.A."/>
        </authorList>
    </citation>
    <scope>NUCLEOTIDE SEQUENCE [LARGE SCALE GENOMIC DNA]</scope>
    <source>
        <strain>DP4</strain>
    </source>
</reference>
<evidence type="ECO:0000255" key="1">
    <source>
        <dbReference type="HAMAP-Rule" id="MF_01331"/>
    </source>
</evidence>
<evidence type="ECO:0000305" key="2"/>
<accession>A1VEB1</accession>
<gene>
    <name evidence="1" type="primary">rplV</name>
    <name type="ordered locus">Dvul_1760</name>
</gene>
<sequence length="112" mass="12483">MESRATAKFMRVSPRKTRLVARNIDGLPVEDAMNLLRFTPNKPAGVLYDVLRSALANAQQMPGVDVDAMVVKQVVVNEGPSWKRFLPRAQGRATRIKKRTSHITVILAEGQE</sequence>
<organism>
    <name type="scientific">Nitratidesulfovibrio vulgaris (strain DP4)</name>
    <name type="common">Desulfovibrio vulgaris</name>
    <dbReference type="NCBI Taxonomy" id="391774"/>
    <lineage>
        <taxon>Bacteria</taxon>
        <taxon>Pseudomonadati</taxon>
        <taxon>Thermodesulfobacteriota</taxon>
        <taxon>Desulfovibrionia</taxon>
        <taxon>Desulfovibrionales</taxon>
        <taxon>Desulfovibrionaceae</taxon>
        <taxon>Nitratidesulfovibrio</taxon>
    </lineage>
</organism>
<comment type="function">
    <text evidence="1">This protein binds specifically to 23S rRNA; its binding is stimulated by other ribosomal proteins, e.g. L4, L17, and L20. It is important during the early stages of 50S assembly. It makes multiple contacts with different domains of the 23S rRNA in the assembled 50S subunit and ribosome (By similarity).</text>
</comment>
<comment type="function">
    <text evidence="1">The globular domain of the protein is located near the polypeptide exit tunnel on the outside of the subunit, while an extended beta-hairpin is found that lines the wall of the exit tunnel in the center of the 70S ribosome.</text>
</comment>
<comment type="subunit">
    <text evidence="1">Part of the 50S ribosomal subunit.</text>
</comment>
<comment type="similarity">
    <text evidence="1">Belongs to the universal ribosomal protein uL22 family.</text>
</comment>
<keyword id="KW-0687">Ribonucleoprotein</keyword>
<keyword id="KW-0689">Ribosomal protein</keyword>
<keyword id="KW-0694">RNA-binding</keyword>
<keyword id="KW-0699">rRNA-binding</keyword>
<protein>
    <recommendedName>
        <fullName evidence="1">Large ribosomal subunit protein uL22</fullName>
    </recommendedName>
    <alternativeName>
        <fullName evidence="2">50S ribosomal protein L22</fullName>
    </alternativeName>
</protein>
<proteinExistence type="inferred from homology"/>
<name>RL22_NITV4</name>
<dbReference type="EMBL" id="CP000527">
    <property type="protein sequence ID" value="ABM28777.1"/>
    <property type="molecule type" value="Genomic_DNA"/>
</dbReference>
<dbReference type="RefSeq" id="WP_010938603.1">
    <property type="nucleotide sequence ID" value="NC_008751.1"/>
</dbReference>
<dbReference type="SMR" id="A1VEB1"/>
<dbReference type="KEGG" id="dvl:Dvul_1760"/>
<dbReference type="HOGENOM" id="CLU_083987_3_3_7"/>
<dbReference type="Proteomes" id="UP000009173">
    <property type="component" value="Chromosome"/>
</dbReference>
<dbReference type="GO" id="GO:0022625">
    <property type="term" value="C:cytosolic large ribosomal subunit"/>
    <property type="evidence" value="ECO:0007669"/>
    <property type="project" value="TreeGrafter"/>
</dbReference>
<dbReference type="GO" id="GO:0019843">
    <property type="term" value="F:rRNA binding"/>
    <property type="evidence" value="ECO:0007669"/>
    <property type="project" value="UniProtKB-UniRule"/>
</dbReference>
<dbReference type="GO" id="GO:0003735">
    <property type="term" value="F:structural constituent of ribosome"/>
    <property type="evidence" value="ECO:0007669"/>
    <property type="project" value="InterPro"/>
</dbReference>
<dbReference type="GO" id="GO:0006412">
    <property type="term" value="P:translation"/>
    <property type="evidence" value="ECO:0007669"/>
    <property type="project" value="UniProtKB-UniRule"/>
</dbReference>
<dbReference type="CDD" id="cd00336">
    <property type="entry name" value="Ribosomal_L22"/>
    <property type="match status" value="1"/>
</dbReference>
<dbReference type="Gene3D" id="3.90.470.10">
    <property type="entry name" value="Ribosomal protein L22/L17"/>
    <property type="match status" value="1"/>
</dbReference>
<dbReference type="HAMAP" id="MF_01331_B">
    <property type="entry name" value="Ribosomal_uL22_B"/>
    <property type="match status" value="1"/>
</dbReference>
<dbReference type="InterPro" id="IPR001063">
    <property type="entry name" value="Ribosomal_uL22"/>
</dbReference>
<dbReference type="InterPro" id="IPR005727">
    <property type="entry name" value="Ribosomal_uL22_bac/chlpt-type"/>
</dbReference>
<dbReference type="InterPro" id="IPR047867">
    <property type="entry name" value="Ribosomal_uL22_bac/org-type"/>
</dbReference>
<dbReference type="InterPro" id="IPR018260">
    <property type="entry name" value="Ribosomal_uL22_CS"/>
</dbReference>
<dbReference type="InterPro" id="IPR036394">
    <property type="entry name" value="Ribosomal_uL22_sf"/>
</dbReference>
<dbReference type="NCBIfam" id="TIGR01044">
    <property type="entry name" value="rplV_bact"/>
    <property type="match status" value="1"/>
</dbReference>
<dbReference type="PANTHER" id="PTHR13501">
    <property type="entry name" value="CHLOROPLAST 50S RIBOSOMAL PROTEIN L22-RELATED"/>
    <property type="match status" value="1"/>
</dbReference>
<dbReference type="PANTHER" id="PTHR13501:SF8">
    <property type="entry name" value="LARGE RIBOSOMAL SUBUNIT PROTEIN UL22M"/>
    <property type="match status" value="1"/>
</dbReference>
<dbReference type="Pfam" id="PF00237">
    <property type="entry name" value="Ribosomal_L22"/>
    <property type="match status" value="1"/>
</dbReference>
<dbReference type="SUPFAM" id="SSF54843">
    <property type="entry name" value="Ribosomal protein L22"/>
    <property type="match status" value="1"/>
</dbReference>
<dbReference type="PROSITE" id="PS00464">
    <property type="entry name" value="RIBOSOMAL_L22"/>
    <property type="match status" value="1"/>
</dbReference>